<evidence type="ECO:0000255" key="1">
    <source>
        <dbReference type="HAMAP-Rule" id="MF_00388"/>
    </source>
</evidence>
<name>LPXC_POLNA</name>
<organism>
    <name type="scientific">Polaromonas naphthalenivorans (strain CJ2)</name>
    <dbReference type="NCBI Taxonomy" id="365044"/>
    <lineage>
        <taxon>Bacteria</taxon>
        <taxon>Pseudomonadati</taxon>
        <taxon>Pseudomonadota</taxon>
        <taxon>Betaproteobacteria</taxon>
        <taxon>Burkholderiales</taxon>
        <taxon>Comamonadaceae</taxon>
        <taxon>Polaromonas</taxon>
    </lineage>
</organism>
<gene>
    <name evidence="1" type="primary">lpxC</name>
    <name type="ordered locus">Pnap_3411</name>
</gene>
<dbReference type="EC" id="3.5.1.108" evidence="1"/>
<dbReference type="EMBL" id="CP000529">
    <property type="protein sequence ID" value="ABM38708.1"/>
    <property type="molecule type" value="Genomic_DNA"/>
</dbReference>
<dbReference type="RefSeq" id="WP_011802779.1">
    <property type="nucleotide sequence ID" value="NC_008781.1"/>
</dbReference>
<dbReference type="SMR" id="A1VST0"/>
<dbReference type="STRING" id="365044.Pnap_3411"/>
<dbReference type="KEGG" id="pna:Pnap_3411"/>
<dbReference type="eggNOG" id="COG0774">
    <property type="taxonomic scope" value="Bacteria"/>
</dbReference>
<dbReference type="HOGENOM" id="CLU_046528_1_0_4"/>
<dbReference type="OrthoDB" id="9802746at2"/>
<dbReference type="UniPathway" id="UPA00359">
    <property type="reaction ID" value="UER00478"/>
</dbReference>
<dbReference type="Proteomes" id="UP000000644">
    <property type="component" value="Chromosome"/>
</dbReference>
<dbReference type="GO" id="GO:0016020">
    <property type="term" value="C:membrane"/>
    <property type="evidence" value="ECO:0007669"/>
    <property type="project" value="GOC"/>
</dbReference>
<dbReference type="GO" id="GO:0046872">
    <property type="term" value="F:metal ion binding"/>
    <property type="evidence" value="ECO:0007669"/>
    <property type="project" value="UniProtKB-KW"/>
</dbReference>
<dbReference type="GO" id="GO:0103117">
    <property type="term" value="F:UDP-3-O-acyl-N-acetylglucosamine deacetylase activity"/>
    <property type="evidence" value="ECO:0007669"/>
    <property type="project" value="UniProtKB-UniRule"/>
</dbReference>
<dbReference type="GO" id="GO:0009245">
    <property type="term" value="P:lipid A biosynthetic process"/>
    <property type="evidence" value="ECO:0007669"/>
    <property type="project" value="UniProtKB-UniRule"/>
</dbReference>
<dbReference type="Gene3D" id="3.30.230.20">
    <property type="entry name" value="lpxc deacetylase, domain 1"/>
    <property type="match status" value="1"/>
</dbReference>
<dbReference type="Gene3D" id="3.30.1700.10">
    <property type="entry name" value="lpxc deacetylase, domain 2"/>
    <property type="match status" value="1"/>
</dbReference>
<dbReference type="HAMAP" id="MF_00388">
    <property type="entry name" value="LpxC"/>
    <property type="match status" value="1"/>
</dbReference>
<dbReference type="InterPro" id="IPR020568">
    <property type="entry name" value="Ribosomal_Su5_D2-typ_SF"/>
</dbReference>
<dbReference type="InterPro" id="IPR004463">
    <property type="entry name" value="UDP-acyl_GlcNac_deAcase"/>
</dbReference>
<dbReference type="InterPro" id="IPR011334">
    <property type="entry name" value="UDP-acyl_GlcNac_deAcase_C"/>
</dbReference>
<dbReference type="InterPro" id="IPR015870">
    <property type="entry name" value="UDP-acyl_N-AcGlcN_deAcase_N"/>
</dbReference>
<dbReference type="NCBIfam" id="TIGR00325">
    <property type="entry name" value="lpxC"/>
    <property type="match status" value="1"/>
</dbReference>
<dbReference type="PANTHER" id="PTHR33694">
    <property type="entry name" value="UDP-3-O-ACYL-N-ACETYLGLUCOSAMINE DEACETYLASE 1, MITOCHONDRIAL-RELATED"/>
    <property type="match status" value="1"/>
</dbReference>
<dbReference type="PANTHER" id="PTHR33694:SF1">
    <property type="entry name" value="UDP-3-O-ACYL-N-ACETYLGLUCOSAMINE DEACETYLASE 1, MITOCHONDRIAL-RELATED"/>
    <property type="match status" value="1"/>
</dbReference>
<dbReference type="Pfam" id="PF03331">
    <property type="entry name" value="LpxC"/>
    <property type="match status" value="1"/>
</dbReference>
<dbReference type="SUPFAM" id="SSF54211">
    <property type="entry name" value="Ribosomal protein S5 domain 2-like"/>
    <property type="match status" value="2"/>
</dbReference>
<proteinExistence type="inferred from homology"/>
<reference key="1">
    <citation type="journal article" date="2009" name="Environ. Microbiol.">
        <title>The genome of Polaromonas naphthalenivorans strain CJ2, isolated from coal tar-contaminated sediment, reveals physiological and metabolic versatility and evolution through extensive horizontal gene transfer.</title>
        <authorList>
            <person name="Yagi J.M."/>
            <person name="Sims D."/>
            <person name="Brettin T."/>
            <person name="Bruce D."/>
            <person name="Madsen E.L."/>
        </authorList>
    </citation>
    <scope>NUCLEOTIDE SEQUENCE [LARGE SCALE GENOMIC DNA]</scope>
    <source>
        <strain>CJ2</strain>
    </source>
</reference>
<protein>
    <recommendedName>
        <fullName evidence="1">UDP-3-O-acyl-N-acetylglucosamine deacetylase</fullName>
        <shortName evidence="1">UDP-3-O-acyl-GlcNAc deacetylase</shortName>
        <ecNumber evidence="1">3.5.1.108</ecNumber>
    </recommendedName>
    <alternativeName>
        <fullName evidence="1">UDP-3-O-[R-3-hydroxymyristoyl]-N-acetylglucosamine deacetylase</fullName>
    </alternativeName>
</protein>
<sequence>MLAQRTLKSLTKAVGVGLHSGQRVELTLRPAPPDSGIVFRRVDLPEPVDIVISPEAVTDTRLASTISSGSAKVHTVEHLMSACAGLGLDNLIIDITAEEVPILDGSASSFVFLLQSAGIALQDAPKRFVRILKPVEVREGEGANVKWARLSPYEGYKLSFEIDFDHPAVDSTGQRVEFDMGSGGYSRDIARARTFGFTKDVEMMRANGLALGGGLDNAIVMDDYKVLNSEGLRYNDEFVKHKILDAMGDLYLLGKPLLAAYSAFRSGHAMNNKLLRELQAHPEAYEIVTFDDEKSAPKGFSTLPRAW</sequence>
<keyword id="KW-0378">Hydrolase</keyword>
<keyword id="KW-0441">Lipid A biosynthesis</keyword>
<keyword id="KW-0444">Lipid biosynthesis</keyword>
<keyword id="KW-0443">Lipid metabolism</keyword>
<keyword id="KW-0479">Metal-binding</keyword>
<keyword id="KW-1185">Reference proteome</keyword>
<keyword id="KW-0862">Zinc</keyword>
<feature type="chain" id="PRO_1000122804" description="UDP-3-O-acyl-N-acetylglucosamine deacetylase">
    <location>
        <begin position="1"/>
        <end position="307"/>
    </location>
</feature>
<feature type="active site" description="Proton donor" evidence="1">
    <location>
        <position position="268"/>
    </location>
</feature>
<feature type="binding site" evidence="1">
    <location>
        <position position="78"/>
    </location>
    <ligand>
        <name>Zn(2+)</name>
        <dbReference type="ChEBI" id="CHEBI:29105"/>
    </ligand>
</feature>
<feature type="binding site" evidence="1">
    <location>
        <position position="241"/>
    </location>
    <ligand>
        <name>Zn(2+)</name>
        <dbReference type="ChEBI" id="CHEBI:29105"/>
    </ligand>
</feature>
<feature type="binding site" evidence="1">
    <location>
        <position position="245"/>
    </location>
    <ligand>
        <name>Zn(2+)</name>
        <dbReference type="ChEBI" id="CHEBI:29105"/>
    </ligand>
</feature>
<comment type="function">
    <text evidence="1">Catalyzes the hydrolysis of UDP-3-O-myristoyl-N-acetylglucosamine to form UDP-3-O-myristoylglucosamine and acetate, the committed step in lipid A biosynthesis.</text>
</comment>
<comment type="catalytic activity">
    <reaction evidence="1">
        <text>a UDP-3-O-[(3R)-3-hydroxyacyl]-N-acetyl-alpha-D-glucosamine + H2O = a UDP-3-O-[(3R)-3-hydroxyacyl]-alpha-D-glucosamine + acetate</text>
        <dbReference type="Rhea" id="RHEA:67816"/>
        <dbReference type="ChEBI" id="CHEBI:15377"/>
        <dbReference type="ChEBI" id="CHEBI:30089"/>
        <dbReference type="ChEBI" id="CHEBI:137740"/>
        <dbReference type="ChEBI" id="CHEBI:173225"/>
        <dbReference type="EC" id="3.5.1.108"/>
    </reaction>
</comment>
<comment type="cofactor">
    <cofactor evidence="1">
        <name>Zn(2+)</name>
        <dbReference type="ChEBI" id="CHEBI:29105"/>
    </cofactor>
</comment>
<comment type="pathway">
    <text evidence="1">Glycolipid biosynthesis; lipid IV(A) biosynthesis; lipid IV(A) from (3R)-3-hydroxytetradecanoyl-[acyl-carrier-protein] and UDP-N-acetyl-alpha-D-glucosamine: step 2/6.</text>
</comment>
<comment type="similarity">
    <text evidence="1">Belongs to the LpxC family.</text>
</comment>
<accession>A1VST0</accession>